<organism>
    <name type="scientific">Porphyromonas gingivalis (strain ATCC BAA-308 / W83)</name>
    <dbReference type="NCBI Taxonomy" id="242619"/>
    <lineage>
        <taxon>Bacteria</taxon>
        <taxon>Pseudomonadati</taxon>
        <taxon>Bacteroidota</taxon>
        <taxon>Bacteroidia</taxon>
        <taxon>Bacteroidales</taxon>
        <taxon>Porphyromonadaceae</taxon>
        <taxon>Porphyromonas</taxon>
    </lineage>
</organism>
<proteinExistence type="inferred from homology"/>
<keyword id="KW-0488">Methylation</keyword>
<keyword id="KW-1185">Reference proteome</keyword>
<keyword id="KW-0687">Ribonucleoprotein</keyword>
<keyword id="KW-0689">Ribosomal protein</keyword>
<keyword id="KW-0694">RNA-binding</keyword>
<keyword id="KW-0699">rRNA-binding</keyword>
<protein>
    <recommendedName>
        <fullName evidence="1">Large ribosomal subunit protein uL11</fullName>
    </recommendedName>
    <alternativeName>
        <fullName evidence="2">50S ribosomal protein L11</fullName>
    </alternativeName>
</protein>
<name>RL11_PORGI</name>
<feature type="chain" id="PRO_0000104336" description="Large ribosomal subunit protein uL11">
    <location>
        <begin position="1"/>
        <end position="145"/>
    </location>
</feature>
<evidence type="ECO:0000255" key="1">
    <source>
        <dbReference type="HAMAP-Rule" id="MF_00736"/>
    </source>
</evidence>
<evidence type="ECO:0000305" key="2"/>
<comment type="function">
    <text evidence="1">Forms part of the ribosomal stalk which helps the ribosome interact with GTP-bound translation factors.</text>
</comment>
<comment type="subunit">
    <text evidence="1">Part of the ribosomal stalk of the 50S ribosomal subunit. Interacts with L10 and the large rRNA to form the base of the stalk. L10 forms an elongated spine to which L12 dimers bind in a sequential fashion forming a multimeric L10(L12)X complex.</text>
</comment>
<comment type="PTM">
    <text evidence="1">One or more lysine residues are methylated.</text>
</comment>
<comment type="similarity">
    <text evidence="1">Belongs to the universal ribosomal protein uL11 family.</text>
</comment>
<gene>
    <name evidence="1" type="primary">rplK</name>
    <name type="ordered locus">PG_0390</name>
</gene>
<sequence length="145" mass="15607">MAKEVAGQIKLQIKGGAANPSPPVGPALGAKGINIMEFCKQFNARTQDKAGKVLPVVITYYADKSFDFIVKTPPVAIQLLEASKQKSGSAEPNRKKVAEITWEQVRTIAEDKLVDLNCFDIKAAMKMVAGTARSMGIAIKGDFPE</sequence>
<accession>Q7MX31</accession>
<dbReference type="EMBL" id="AE015924">
    <property type="protein sequence ID" value="AAQ65595.1"/>
    <property type="molecule type" value="Genomic_DNA"/>
</dbReference>
<dbReference type="RefSeq" id="WP_010955999.1">
    <property type="nucleotide sequence ID" value="NC_002950.2"/>
</dbReference>
<dbReference type="SMR" id="Q7MX31"/>
<dbReference type="STRING" id="242619.PG_0390"/>
<dbReference type="EnsemblBacteria" id="AAQ65595">
    <property type="protein sequence ID" value="AAQ65595"/>
    <property type="gene ID" value="PG_0390"/>
</dbReference>
<dbReference type="GeneID" id="29256749"/>
<dbReference type="KEGG" id="pgi:PG_0390"/>
<dbReference type="eggNOG" id="COG0080">
    <property type="taxonomic scope" value="Bacteria"/>
</dbReference>
<dbReference type="HOGENOM" id="CLU_074237_2_1_10"/>
<dbReference type="Proteomes" id="UP000000588">
    <property type="component" value="Chromosome"/>
</dbReference>
<dbReference type="GO" id="GO:0022625">
    <property type="term" value="C:cytosolic large ribosomal subunit"/>
    <property type="evidence" value="ECO:0007669"/>
    <property type="project" value="TreeGrafter"/>
</dbReference>
<dbReference type="GO" id="GO:0070180">
    <property type="term" value="F:large ribosomal subunit rRNA binding"/>
    <property type="evidence" value="ECO:0007669"/>
    <property type="project" value="UniProtKB-UniRule"/>
</dbReference>
<dbReference type="GO" id="GO:0003735">
    <property type="term" value="F:structural constituent of ribosome"/>
    <property type="evidence" value="ECO:0007669"/>
    <property type="project" value="InterPro"/>
</dbReference>
<dbReference type="GO" id="GO:0006412">
    <property type="term" value="P:translation"/>
    <property type="evidence" value="ECO:0007669"/>
    <property type="project" value="UniProtKB-UniRule"/>
</dbReference>
<dbReference type="CDD" id="cd00349">
    <property type="entry name" value="Ribosomal_L11"/>
    <property type="match status" value="1"/>
</dbReference>
<dbReference type="FunFam" id="1.10.10.250:FF:000001">
    <property type="entry name" value="50S ribosomal protein L11"/>
    <property type="match status" value="1"/>
</dbReference>
<dbReference type="FunFam" id="3.30.1550.10:FF:000001">
    <property type="entry name" value="50S ribosomal protein L11"/>
    <property type="match status" value="1"/>
</dbReference>
<dbReference type="Gene3D" id="1.10.10.250">
    <property type="entry name" value="Ribosomal protein L11, C-terminal domain"/>
    <property type="match status" value="1"/>
</dbReference>
<dbReference type="Gene3D" id="3.30.1550.10">
    <property type="entry name" value="Ribosomal protein L11/L12, N-terminal domain"/>
    <property type="match status" value="1"/>
</dbReference>
<dbReference type="HAMAP" id="MF_00736">
    <property type="entry name" value="Ribosomal_uL11"/>
    <property type="match status" value="1"/>
</dbReference>
<dbReference type="InterPro" id="IPR000911">
    <property type="entry name" value="Ribosomal_uL11"/>
</dbReference>
<dbReference type="InterPro" id="IPR006519">
    <property type="entry name" value="Ribosomal_uL11_bac-typ"/>
</dbReference>
<dbReference type="InterPro" id="IPR020783">
    <property type="entry name" value="Ribosomal_uL11_C"/>
</dbReference>
<dbReference type="InterPro" id="IPR036769">
    <property type="entry name" value="Ribosomal_uL11_C_sf"/>
</dbReference>
<dbReference type="InterPro" id="IPR020785">
    <property type="entry name" value="Ribosomal_uL11_CS"/>
</dbReference>
<dbReference type="InterPro" id="IPR020784">
    <property type="entry name" value="Ribosomal_uL11_N"/>
</dbReference>
<dbReference type="InterPro" id="IPR036796">
    <property type="entry name" value="Ribosomal_uL11_N_sf"/>
</dbReference>
<dbReference type="NCBIfam" id="TIGR01632">
    <property type="entry name" value="L11_bact"/>
    <property type="match status" value="1"/>
</dbReference>
<dbReference type="PANTHER" id="PTHR11661">
    <property type="entry name" value="60S RIBOSOMAL PROTEIN L12"/>
    <property type="match status" value="1"/>
</dbReference>
<dbReference type="PANTHER" id="PTHR11661:SF1">
    <property type="entry name" value="LARGE RIBOSOMAL SUBUNIT PROTEIN UL11M"/>
    <property type="match status" value="1"/>
</dbReference>
<dbReference type="Pfam" id="PF00298">
    <property type="entry name" value="Ribosomal_L11"/>
    <property type="match status" value="1"/>
</dbReference>
<dbReference type="Pfam" id="PF03946">
    <property type="entry name" value="Ribosomal_L11_N"/>
    <property type="match status" value="1"/>
</dbReference>
<dbReference type="SMART" id="SM00649">
    <property type="entry name" value="RL11"/>
    <property type="match status" value="1"/>
</dbReference>
<dbReference type="SUPFAM" id="SSF54747">
    <property type="entry name" value="Ribosomal L11/L12e N-terminal domain"/>
    <property type="match status" value="1"/>
</dbReference>
<dbReference type="SUPFAM" id="SSF46906">
    <property type="entry name" value="Ribosomal protein L11, C-terminal domain"/>
    <property type="match status" value="1"/>
</dbReference>
<dbReference type="PROSITE" id="PS00359">
    <property type="entry name" value="RIBOSOMAL_L11"/>
    <property type="match status" value="1"/>
</dbReference>
<reference key="1">
    <citation type="journal article" date="2003" name="J. Bacteriol.">
        <title>Complete genome sequence of the oral pathogenic bacterium Porphyromonas gingivalis strain W83.</title>
        <authorList>
            <person name="Nelson K.E."/>
            <person name="Fleischmann R.D."/>
            <person name="DeBoy R.T."/>
            <person name="Paulsen I.T."/>
            <person name="Fouts D.E."/>
            <person name="Eisen J.A."/>
            <person name="Daugherty S.C."/>
            <person name="Dodson R.J."/>
            <person name="Durkin A.S."/>
            <person name="Gwinn M.L."/>
            <person name="Haft D.H."/>
            <person name="Kolonay J.F."/>
            <person name="Nelson W.C."/>
            <person name="Mason T.M."/>
            <person name="Tallon L."/>
            <person name="Gray J."/>
            <person name="Granger D."/>
            <person name="Tettelin H."/>
            <person name="Dong H."/>
            <person name="Galvin J.L."/>
            <person name="Duncan M.J."/>
            <person name="Dewhirst F.E."/>
            <person name="Fraser C.M."/>
        </authorList>
    </citation>
    <scope>NUCLEOTIDE SEQUENCE [LARGE SCALE GENOMIC DNA]</scope>
    <source>
        <strain>ATCC BAA-308 / W83</strain>
    </source>
</reference>